<gene>
    <name type="primary">VHA-E3</name>
    <name type="ordered locus">At1g64200</name>
    <name type="ORF">F22C12.4</name>
</gene>
<proteinExistence type="evidence at transcript level"/>
<name>VATE3_ARATH</name>
<organism>
    <name type="scientific">Arabidopsis thaliana</name>
    <name type="common">Mouse-ear cress</name>
    <dbReference type="NCBI Taxonomy" id="3702"/>
    <lineage>
        <taxon>Eukaryota</taxon>
        <taxon>Viridiplantae</taxon>
        <taxon>Streptophyta</taxon>
        <taxon>Embryophyta</taxon>
        <taxon>Tracheophyta</taxon>
        <taxon>Spermatophyta</taxon>
        <taxon>Magnoliopsida</taxon>
        <taxon>eudicotyledons</taxon>
        <taxon>Gunneridae</taxon>
        <taxon>Pentapetalae</taxon>
        <taxon>rosids</taxon>
        <taxon>malvids</taxon>
        <taxon>Brassicales</taxon>
        <taxon>Brassicaceae</taxon>
        <taxon>Camelineae</taxon>
        <taxon>Arabidopsis</taxon>
    </lineage>
</organism>
<comment type="function">
    <text evidence="1">Subunit of the peripheral V1 complex of vacuolar ATPase essential for assembly or catalytic function. V-ATPase is responsible for acidifying a variety of intracellular compartments in eukaryotic cells (By similarity).</text>
</comment>
<comment type="subunit">
    <text>V-ATPase is a heteromultimeric enzyme composed of a peripheral catalytic V1 complex (components A to H) attached to an integral membrane V0 proton pore complex (components: a, c, c'', d and e).</text>
</comment>
<comment type="subcellular location">
    <subcellularLocation>
        <location evidence="5">Vacuole membrane</location>
        <topology evidence="5">Peripheral membrane protein</topology>
    </subcellularLocation>
</comment>
<comment type="developmental stage">
    <text evidence="4">Expressed during embryogenesis.</text>
</comment>
<comment type="similarity">
    <text evidence="5">Belongs to the V-ATPase E subunit family.</text>
</comment>
<comment type="sequence caution" evidence="5">
    <conflict type="erroneous gene model prediction">
        <sequence resource="EMBL-CDS" id="AAF24559"/>
    </conflict>
    <text>The predicted gene has been split into 2 genes: At1g64195 and At1g64200.</text>
</comment>
<protein>
    <recommendedName>
        <fullName>V-type proton ATPase subunit E3</fullName>
        <shortName>V-ATPase subunit E3</shortName>
    </recommendedName>
    <alternativeName>
        <fullName>Vacuolar H(+)-ATPase subunit E isoform 3</fullName>
    </alternativeName>
    <alternativeName>
        <fullName>Vacuolar proton pump subunit E3</fullName>
    </alternativeName>
</protein>
<accession>P0CAN7</accession>
<accession>Q9SH70</accession>
<sequence length="237" mass="27085">MNDADASIQIQQMVRFIRQEAEEKANEISISSEEEFNIEKLQLVEAEKKKIRQEYEKKEKQVDVRKKIDYSMQLNASRIKVLQAQDDIVNAMKEEAAKQLLKVSQHGFFNHHHHQYKHLLKDLIVQCLLRLKEPAVLLRCREEDLDIVESMLDDASEEYCKKAKVHAPEIIVDKDIFLPPAPSDDDPHALSCAGGVVLASRDGKIVCENTLDARLEVAFRNKLPEIRKSLFGKVGAA</sequence>
<keyword id="KW-0007">Acetylation</keyword>
<keyword id="KW-0175">Coiled coil</keyword>
<keyword id="KW-0375">Hydrogen ion transport</keyword>
<keyword id="KW-0406">Ion transport</keyword>
<keyword id="KW-0472">Membrane</keyword>
<keyword id="KW-1185">Reference proteome</keyword>
<keyword id="KW-0813">Transport</keyword>
<keyword id="KW-0926">Vacuole</keyword>
<evidence type="ECO:0000250" key="1"/>
<evidence type="ECO:0000250" key="2">
    <source>
        <dbReference type="UniProtKB" id="Q39258"/>
    </source>
</evidence>
<evidence type="ECO:0000255" key="3"/>
<evidence type="ECO:0000269" key="4">
    <source>
    </source>
</evidence>
<evidence type="ECO:0000305" key="5"/>
<feature type="chain" id="PRO_0000373819" description="V-type proton ATPase subunit E3">
    <location>
        <begin position="1"/>
        <end position="237"/>
    </location>
</feature>
<feature type="coiled-coil region" evidence="3">
    <location>
        <begin position="9"/>
        <end position="67"/>
    </location>
</feature>
<feature type="modified residue" description="N-acetylmethionine" evidence="2">
    <location>
        <position position="1"/>
    </location>
</feature>
<reference key="1">
    <citation type="journal article" date="2000" name="Nature">
        <title>Sequence and analysis of chromosome 1 of the plant Arabidopsis thaliana.</title>
        <authorList>
            <person name="Theologis A."/>
            <person name="Ecker J.R."/>
            <person name="Palm C.J."/>
            <person name="Federspiel N.A."/>
            <person name="Kaul S."/>
            <person name="White O."/>
            <person name="Alonso J."/>
            <person name="Altafi H."/>
            <person name="Araujo R."/>
            <person name="Bowman C.L."/>
            <person name="Brooks S.Y."/>
            <person name="Buehler E."/>
            <person name="Chan A."/>
            <person name="Chao Q."/>
            <person name="Chen H."/>
            <person name="Cheuk R.F."/>
            <person name="Chin C.W."/>
            <person name="Chung M.K."/>
            <person name="Conn L."/>
            <person name="Conway A.B."/>
            <person name="Conway A.R."/>
            <person name="Creasy T.H."/>
            <person name="Dewar K."/>
            <person name="Dunn P."/>
            <person name="Etgu P."/>
            <person name="Feldblyum T.V."/>
            <person name="Feng J.-D."/>
            <person name="Fong B."/>
            <person name="Fujii C.Y."/>
            <person name="Gill J.E."/>
            <person name="Goldsmith A.D."/>
            <person name="Haas B."/>
            <person name="Hansen N.F."/>
            <person name="Hughes B."/>
            <person name="Huizar L."/>
            <person name="Hunter J.L."/>
            <person name="Jenkins J."/>
            <person name="Johnson-Hopson C."/>
            <person name="Khan S."/>
            <person name="Khaykin E."/>
            <person name="Kim C.J."/>
            <person name="Koo H.L."/>
            <person name="Kremenetskaia I."/>
            <person name="Kurtz D.B."/>
            <person name="Kwan A."/>
            <person name="Lam B."/>
            <person name="Langin-Hooper S."/>
            <person name="Lee A."/>
            <person name="Lee J.M."/>
            <person name="Lenz C.A."/>
            <person name="Li J.H."/>
            <person name="Li Y.-P."/>
            <person name="Lin X."/>
            <person name="Liu S.X."/>
            <person name="Liu Z.A."/>
            <person name="Luros J.S."/>
            <person name="Maiti R."/>
            <person name="Marziali A."/>
            <person name="Militscher J."/>
            <person name="Miranda M."/>
            <person name="Nguyen M."/>
            <person name="Nierman W.C."/>
            <person name="Osborne B.I."/>
            <person name="Pai G."/>
            <person name="Peterson J."/>
            <person name="Pham P.K."/>
            <person name="Rizzo M."/>
            <person name="Rooney T."/>
            <person name="Rowley D."/>
            <person name="Sakano H."/>
            <person name="Salzberg S.L."/>
            <person name="Schwartz J.R."/>
            <person name="Shinn P."/>
            <person name="Southwick A.M."/>
            <person name="Sun H."/>
            <person name="Tallon L.J."/>
            <person name="Tambunga G."/>
            <person name="Toriumi M.J."/>
            <person name="Town C.D."/>
            <person name="Utterback T."/>
            <person name="Van Aken S."/>
            <person name="Vaysberg M."/>
            <person name="Vysotskaia V.S."/>
            <person name="Walker M."/>
            <person name="Wu D."/>
            <person name="Yu G."/>
            <person name="Fraser C.M."/>
            <person name="Venter J.C."/>
            <person name="Davis R.W."/>
        </authorList>
    </citation>
    <scope>NUCLEOTIDE SEQUENCE [LARGE SCALE GENOMIC DNA]</scope>
    <source>
        <strain>cv. Columbia</strain>
    </source>
</reference>
<reference key="2">
    <citation type="journal article" date="2017" name="Plant J.">
        <title>Araport11: a complete reannotation of the Arabidopsis thaliana reference genome.</title>
        <authorList>
            <person name="Cheng C.Y."/>
            <person name="Krishnakumar V."/>
            <person name="Chan A.P."/>
            <person name="Thibaud-Nissen F."/>
            <person name="Schobel S."/>
            <person name="Town C.D."/>
        </authorList>
    </citation>
    <scope>GENOME REANNOTATION</scope>
    <source>
        <strain>cv. Columbia</strain>
    </source>
</reference>
<reference key="3">
    <citation type="journal article" date="2007" name="Plant J.">
        <title>Small cysteine-rich peptides resembling antimicrobial peptides have been under-predicted in plants.</title>
        <authorList>
            <person name="Silverstein K.A.T."/>
            <person name="Moskal W.A. Jr."/>
            <person name="Wu H.C."/>
            <person name="Underwood B.A."/>
            <person name="Graham M.A."/>
            <person name="Town C.D."/>
            <person name="VandenBosch K.A."/>
        </authorList>
    </citation>
    <scope>NUCLEOTIDE SEQUENCE [LARGE SCALE MRNA]</scope>
    <source>
        <strain>cv. Columbia</strain>
    </source>
</reference>
<reference key="4">
    <citation type="journal article" date="2002" name="Trends Plant Sci.">
        <title>A simple nomenclature for a complex proton pump: VHA genes encode the vacuolar H(+)-ATPase.</title>
        <authorList>
            <person name="Sze H."/>
            <person name="Schumacher K."/>
            <person name="Mueller M.L."/>
            <person name="Padmanaban S."/>
            <person name="Taiz L."/>
        </authorList>
    </citation>
    <scope>GENE FAMILY</scope>
    <scope>NOMENCLATURE</scope>
</reference>
<reference key="5">
    <citation type="journal article" date="2005" name="Plant J.">
        <title>Arabidopsis vacuolar H(+)-ATPase subunit E isoform 1 is required for Golgi organization and vacuole function in embryogenesis.</title>
        <authorList>
            <person name="Strompen G."/>
            <person name="Dettmer J."/>
            <person name="Stierhof Y.-D."/>
            <person name="Schumacher K."/>
            <person name="Juergens G."/>
            <person name="Mayer U."/>
        </authorList>
    </citation>
    <scope>DEVELOPMENTAL STAGE</scope>
</reference>
<dbReference type="EMBL" id="AC007764">
    <property type="protein sequence ID" value="AAF24559.1"/>
    <property type="status" value="ALT_SEQ"/>
    <property type="molecule type" value="Genomic_DNA"/>
</dbReference>
<dbReference type="EMBL" id="CP002684">
    <property type="protein sequence ID" value="AEE34209.1"/>
    <property type="molecule type" value="Genomic_DNA"/>
</dbReference>
<dbReference type="EMBL" id="EF182846">
    <property type="status" value="NOT_ANNOTATED_CDS"/>
    <property type="molecule type" value="mRNA"/>
</dbReference>
<dbReference type="PIR" id="C96666">
    <property type="entry name" value="C96666"/>
</dbReference>
<dbReference type="RefSeq" id="NP_176602.1">
    <property type="nucleotide sequence ID" value="NM_105094.3"/>
</dbReference>
<dbReference type="SMR" id="P0CAN7"/>
<dbReference type="BioGRID" id="27946">
    <property type="interactions" value="10"/>
</dbReference>
<dbReference type="FunCoup" id="P0CAN7">
    <property type="interactions" value="2619"/>
</dbReference>
<dbReference type="STRING" id="3702.P0CAN7"/>
<dbReference type="TCDB" id="3.A.2.2.5">
    <property type="family name" value="the h+- or na+-translocating f-type, v-type and a-type atpase (f-atpase) superfamily"/>
</dbReference>
<dbReference type="PaxDb" id="3702-AT1G64200.1"/>
<dbReference type="ProteomicsDB" id="228578"/>
<dbReference type="EnsemblPlants" id="AT1G64200.1">
    <property type="protein sequence ID" value="AT1G64200.1"/>
    <property type="gene ID" value="AT1G64200"/>
</dbReference>
<dbReference type="GeneID" id="842725"/>
<dbReference type="Gramene" id="AT1G64200.1">
    <property type="protein sequence ID" value="AT1G64200.1"/>
    <property type="gene ID" value="AT1G64200"/>
</dbReference>
<dbReference type="KEGG" id="ath:AT1G64200"/>
<dbReference type="Araport" id="AT1G64200"/>
<dbReference type="TAIR" id="AT1G64200">
    <property type="gene designation" value="VHA-E3"/>
</dbReference>
<dbReference type="eggNOG" id="KOG1664">
    <property type="taxonomic scope" value="Eukaryota"/>
</dbReference>
<dbReference type="HOGENOM" id="CLU_073641_1_0_1"/>
<dbReference type="InParanoid" id="P0CAN7"/>
<dbReference type="OMA" id="QHMMAFI"/>
<dbReference type="PhylomeDB" id="P0CAN7"/>
<dbReference type="PRO" id="PR:P0CAN7"/>
<dbReference type="Proteomes" id="UP000006548">
    <property type="component" value="Chromosome 1"/>
</dbReference>
<dbReference type="ExpressionAtlas" id="P0CAN7">
    <property type="expression patterns" value="baseline and differential"/>
</dbReference>
<dbReference type="GO" id="GO:0000325">
    <property type="term" value="C:plant-type vacuole"/>
    <property type="evidence" value="ECO:0007005"/>
    <property type="project" value="TAIR"/>
</dbReference>
<dbReference type="GO" id="GO:0033178">
    <property type="term" value="C:proton-transporting two-sector ATPase complex, catalytic domain"/>
    <property type="evidence" value="ECO:0007669"/>
    <property type="project" value="InterPro"/>
</dbReference>
<dbReference type="GO" id="GO:0005774">
    <property type="term" value="C:vacuolar membrane"/>
    <property type="evidence" value="ECO:0007669"/>
    <property type="project" value="UniProtKB-SubCell"/>
</dbReference>
<dbReference type="GO" id="GO:0005773">
    <property type="term" value="C:vacuole"/>
    <property type="evidence" value="ECO:0007005"/>
    <property type="project" value="TAIR"/>
</dbReference>
<dbReference type="GO" id="GO:0046961">
    <property type="term" value="F:proton-transporting ATPase activity, rotational mechanism"/>
    <property type="evidence" value="ECO:0007669"/>
    <property type="project" value="InterPro"/>
</dbReference>
<dbReference type="FunFam" id="3.30.2320.30:FF:000002">
    <property type="entry name" value="V-type proton ATPase subunit E3"/>
    <property type="match status" value="1"/>
</dbReference>
<dbReference type="Gene3D" id="6.10.250.1620">
    <property type="match status" value="1"/>
</dbReference>
<dbReference type="Gene3D" id="3.30.2320.30">
    <property type="entry name" value="ATP synthase, E subunit, C-terminal"/>
    <property type="match status" value="1"/>
</dbReference>
<dbReference type="HAMAP" id="MF_00311">
    <property type="entry name" value="ATP_synth_E_arch"/>
    <property type="match status" value="1"/>
</dbReference>
<dbReference type="InterPro" id="IPR038495">
    <property type="entry name" value="ATPase_E_C"/>
</dbReference>
<dbReference type="InterPro" id="IPR002842">
    <property type="entry name" value="ATPase_V1_Esu"/>
</dbReference>
<dbReference type="PANTHER" id="PTHR45715">
    <property type="entry name" value="ATPASE H+-TRANSPORTING V1 SUBUNIT E1A-RELATED"/>
    <property type="match status" value="1"/>
</dbReference>
<dbReference type="Pfam" id="PF01991">
    <property type="entry name" value="vATP-synt_E"/>
    <property type="match status" value="1"/>
</dbReference>
<dbReference type="SUPFAM" id="SSF160527">
    <property type="entry name" value="V-type ATPase subunit E-like"/>
    <property type="match status" value="1"/>
</dbReference>